<protein>
    <recommendedName>
        <fullName>Defensin D7</fullName>
    </recommendedName>
    <alternativeName>
        <fullName>Antimicrobial peptide D7</fullName>
    </alternativeName>
    <alternativeName>
        <fullName>So-D7</fullName>
    </alternativeName>
</protein>
<sequence>GIFSSRKCKTPSKTFKGYCTRDSNCDTSCRYEGYPAGD</sequence>
<proteinExistence type="evidence at protein level"/>
<name>DEFD7_SPIOL</name>
<evidence type="ECO:0000305" key="1"/>
<feature type="chain" id="PRO_0000074257" description="Defensin D7">
    <location>
        <begin position="1"/>
        <end position="38" status="greater than"/>
    </location>
</feature>
<feature type="non-terminal residue" evidence="1">
    <location>
        <position position="38"/>
    </location>
</feature>
<keyword id="KW-0044">Antibiotic</keyword>
<keyword id="KW-0929">Antimicrobial</keyword>
<keyword id="KW-0134">Cell wall</keyword>
<keyword id="KW-0903">Direct protein sequencing</keyword>
<keyword id="KW-0295">Fungicide</keyword>
<keyword id="KW-0611">Plant defense</keyword>
<keyword id="KW-1185">Reference proteome</keyword>
<keyword id="KW-0964">Secreted</keyword>
<dbReference type="SMR" id="P81573"/>
<dbReference type="Proteomes" id="UP001155700">
    <property type="component" value="Unplaced"/>
</dbReference>
<dbReference type="GO" id="GO:0005576">
    <property type="term" value="C:extracellular region"/>
    <property type="evidence" value="ECO:0007669"/>
    <property type="project" value="UniProtKB-KW"/>
</dbReference>
<dbReference type="GO" id="GO:0042742">
    <property type="term" value="P:defense response to bacterium"/>
    <property type="evidence" value="ECO:0007669"/>
    <property type="project" value="UniProtKB-KW"/>
</dbReference>
<dbReference type="GO" id="GO:0050832">
    <property type="term" value="P:defense response to fungus"/>
    <property type="evidence" value="ECO:0007669"/>
    <property type="project" value="UniProtKB-KW"/>
</dbReference>
<dbReference type="GO" id="GO:0031640">
    <property type="term" value="P:killing of cells of another organism"/>
    <property type="evidence" value="ECO:0007669"/>
    <property type="project" value="UniProtKB-KW"/>
</dbReference>
<dbReference type="Gene3D" id="3.30.30.10">
    <property type="entry name" value="Knottin, scorpion toxin-like"/>
    <property type="match status" value="1"/>
</dbReference>
<dbReference type="InterPro" id="IPR008176">
    <property type="entry name" value="Defensin_plant"/>
</dbReference>
<dbReference type="InterPro" id="IPR036574">
    <property type="entry name" value="Scorpion_toxin-like_sf"/>
</dbReference>
<dbReference type="Pfam" id="PF00304">
    <property type="entry name" value="Gamma-thionin"/>
    <property type="match status" value="1"/>
</dbReference>
<dbReference type="SUPFAM" id="SSF57095">
    <property type="entry name" value="Scorpion toxin-like"/>
    <property type="match status" value="1"/>
</dbReference>
<dbReference type="PROSITE" id="PS00940">
    <property type="entry name" value="GAMMA_THIONIN"/>
    <property type="match status" value="1"/>
</dbReference>
<comment type="function">
    <text>Antimicrobial peptide. Active against Fusarium spp., Gram-positive and Gram-negative bacterial pathogens.</text>
</comment>
<comment type="subcellular location">
    <subcellularLocation>
        <location evidence="1">Secreted</location>
        <location evidence="1">Cell wall</location>
    </subcellularLocation>
</comment>
<comment type="tissue specificity">
    <text>Distributed in the epidermal cell layer of leaves and in the subepidermal layer region of stems. Not in roots.</text>
</comment>
<comment type="developmental stage">
    <text>Present throughout the life of the leaf.</text>
</comment>
<comment type="similarity">
    <text evidence="1">Belongs to the DEFL family. Group IV subfamily.</text>
</comment>
<accession>P81573</accession>
<organism evidence="1">
    <name type="scientific">Spinacia oleracea</name>
    <name type="common">Spinach</name>
    <dbReference type="NCBI Taxonomy" id="3562"/>
    <lineage>
        <taxon>Eukaryota</taxon>
        <taxon>Viridiplantae</taxon>
        <taxon>Streptophyta</taxon>
        <taxon>Embryophyta</taxon>
        <taxon>Tracheophyta</taxon>
        <taxon>Spermatophyta</taxon>
        <taxon>Magnoliopsida</taxon>
        <taxon>eudicotyledons</taxon>
        <taxon>Gunneridae</taxon>
        <taxon>Pentapetalae</taxon>
        <taxon>Caryophyllales</taxon>
        <taxon>Chenopodiaceae</taxon>
        <taxon>Chenopodioideae</taxon>
        <taxon>Anserineae</taxon>
        <taxon>Spinacia</taxon>
    </lineage>
</organism>
<reference evidence="1" key="1">
    <citation type="journal article" date="1998" name="FEBS Lett.">
        <title>Novel defensin subfamily from spinach (Spinacia oleracea).</title>
        <authorList>
            <person name="Segura A."/>
            <person name="Moreno M."/>
            <person name="Molina A."/>
            <person name="Garcia-Olmedo F."/>
        </authorList>
    </citation>
    <scope>PROTEIN SEQUENCE</scope>
    <source>
        <strain>cv. Matador</strain>
        <tissue>Leaf</tissue>
    </source>
</reference>